<organism>
    <name type="scientific">Vairimorpha ceranae (strain BRL01)</name>
    <name type="common">Microsporidian parasite</name>
    <name type="synonym">Nosema ceranae</name>
    <dbReference type="NCBI Taxonomy" id="578460"/>
    <lineage>
        <taxon>Eukaryota</taxon>
        <taxon>Fungi</taxon>
        <taxon>Fungi incertae sedis</taxon>
        <taxon>Microsporidia</taxon>
        <taxon>Nosematidae</taxon>
        <taxon>Vairimorpha</taxon>
    </lineage>
</organism>
<protein>
    <recommendedName>
        <fullName>Putative deoxyribonuclease TATDN1 homolog</fullName>
        <ecNumber>3.1.21.-</ecNumber>
    </recommendedName>
</protein>
<reference key="1">
    <citation type="journal article" date="2009" name="PLoS Pathog.">
        <title>Genomic analyses of the microsporidian Nosema ceranae, an emergent pathogen of honey bees.</title>
        <authorList>
            <person name="Cornman R.S."/>
            <person name="Chen Y.P."/>
            <person name="Schatz M.C."/>
            <person name="Street C."/>
            <person name="Zhao Y."/>
            <person name="Desany B."/>
            <person name="Egholm M."/>
            <person name="Hutchison S."/>
            <person name="Pettis J.S."/>
            <person name="Lipkin W.I."/>
            <person name="Evans J.D."/>
        </authorList>
    </citation>
    <scope>NUCLEOTIDE SEQUENCE [LARGE SCALE GENOMIC DNA]</scope>
    <source>
        <strain>BRL01</strain>
    </source>
</reference>
<sequence length="259" mass="29949">MIVDISCNITDSQFKNVEDTILKCKEAKVIPIFVGVDYTTSLKSCNYAEKFDTLFYAGIHPLYSENSVYIPVNSDRCIAIGECGLDYYRLQFSSIETQKRIFKVQLDLKAERYFLHCRDSHRDFMEILSDYNFKGVVHSFTGTVEESKEIIKKGLFIGINGCSLKNEEGIEVVKNLPLNSILVETDSPYCKIRKSYAGYKFVNNYQKHKSNEPYLIYEIIEAIANIKNIPINILLDTLLSNNINFYGERLVECFEKWRL</sequence>
<comment type="function">
    <text evidence="1">Putative deoxyribonuclease.</text>
</comment>
<comment type="cofactor">
    <cofactor evidence="1">
        <name>a divalent metal cation</name>
        <dbReference type="ChEBI" id="CHEBI:60240"/>
    </cofactor>
    <text evidence="1">Binds 2 divalent metal cations per subunit.</text>
</comment>
<comment type="subcellular location">
    <subcellularLocation>
        <location evidence="2">Nucleus</location>
    </subcellularLocation>
</comment>
<comment type="similarity">
    <text evidence="2">Belongs to the metallo-dependent hydrolases superfamily. TatD-type hydrolase family.</text>
</comment>
<feature type="chain" id="PRO_0000388427" description="Putative deoxyribonuclease TATDN1 homolog">
    <location>
        <begin position="1"/>
        <end position="259"/>
    </location>
</feature>
<feature type="binding site" evidence="1">
    <location>
        <position position="82"/>
    </location>
    <ligand>
        <name>a divalent metal cation</name>
        <dbReference type="ChEBI" id="CHEBI:60240"/>
        <label>1</label>
    </ligand>
</feature>
<feature type="binding site" evidence="1">
    <location>
        <position position="82"/>
    </location>
    <ligand>
        <name>a divalent metal cation</name>
        <dbReference type="ChEBI" id="CHEBI:60240"/>
        <label>2</label>
    </ligand>
</feature>
<feature type="binding site" evidence="1">
    <location>
        <position position="116"/>
    </location>
    <ligand>
        <name>a divalent metal cation</name>
        <dbReference type="ChEBI" id="CHEBI:60240"/>
        <label>2</label>
    </ligand>
</feature>
<feature type="binding site" evidence="1">
    <location>
        <position position="138"/>
    </location>
    <ligand>
        <name>a divalent metal cation</name>
        <dbReference type="ChEBI" id="CHEBI:60240"/>
        <label>2</label>
    </ligand>
</feature>
<feature type="binding site" evidence="1">
    <location>
        <position position="186"/>
    </location>
    <ligand>
        <name>a divalent metal cation</name>
        <dbReference type="ChEBI" id="CHEBI:60240"/>
        <label>1</label>
    </ligand>
</feature>
<keyword id="KW-0378">Hydrolase</keyword>
<keyword id="KW-0479">Metal-binding</keyword>
<keyword id="KW-0540">Nuclease</keyword>
<keyword id="KW-0539">Nucleus</keyword>
<keyword id="KW-1185">Reference proteome</keyword>
<name>TATD1_VAIC1</name>
<accession>C4VAS3</accession>
<dbReference type="EC" id="3.1.21.-"/>
<dbReference type="EMBL" id="ACOL01000287">
    <property type="protein sequence ID" value="EEQ81679.1"/>
    <property type="molecule type" value="Genomic_DNA"/>
</dbReference>
<dbReference type="RefSeq" id="XP_002995350.1">
    <property type="nucleotide sequence ID" value="XM_002995304.1"/>
</dbReference>
<dbReference type="SMR" id="C4VAS3"/>
<dbReference type="FunCoup" id="C4VAS3">
    <property type="interactions" value="80"/>
</dbReference>
<dbReference type="STRING" id="578460.C4VAS3"/>
<dbReference type="KEGG" id="nce:NCER_101798"/>
<dbReference type="VEuPathDB" id="MicrosporidiaDB:NCER_101798"/>
<dbReference type="HOGENOM" id="CLU_031506_1_1_1"/>
<dbReference type="InParanoid" id="C4VAS3"/>
<dbReference type="OMA" id="YGGSQKH"/>
<dbReference type="OrthoDB" id="240at6029"/>
<dbReference type="Proteomes" id="UP000009082">
    <property type="component" value="Unassembled WGS sequence"/>
</dbReference>
<dbReference type="GO" id="GO:0005829">
    <property type="term" value="C:cytosol"/>
    <property type="evidence" value="ECO:0007669"/>
    <property type="project" value="TreeGrafter"/>
</dbReference>
<dbReference type="GO" id="GO:0005634">
    <property type="term" value="C:nucleus"/>
    <property type="evidence" value="ECO:0007669"/>
    <property type="project" value="UniProtKB-SubCell"/>
</dbReference>
<dbReference type="GO" id="GO:0008296">
    <property type="term" value="F:3'-5'-DNA exonuclease activity"/>
    <property type="evidence" value="ECO:0007669"/>
    <property type="project" value="TreeGrafter"/>
</dbReference>
<dbReference type="GO" id="GO:0046872">
    <property type="term" value="F:metal ion binding"/>
    <property type="evidence" value="ECO:0007669"/>
    <property type="project" value="UniProtKB-KW"/>
</dbReference>
<dbReference type="CDD" id="cd01310">
    <property type="entry name" value="TatD_DNAse"/>
    <property type="match status" value="1"/>
</dbReference>
<dbReference type="Gene3D" id="3.20.20.140">
    <property type="entry name" value="Metal-dependent hydrolases"/>
    <property type="match status" value="1"/>
</dbReference>
<dbReference type="InterPro" id="IPR018228">
    <property type="entry name" value="DNase_TatD-rel_CS"/>
</dbReference>
<dbReference type="InterPro" id="IPR032466">
    <property type="entry name" value="Metal_Hydrolase"/>
</dbReference>
<dbReference type="InterPro" id="IPR001130">
    <property type="entry name" value="TatD-like"/>
</dbReference>
<dbReference type="InterPro" id="IPR050891">
    <property type="entry name" value="TatD-type_Hydrolase"/>
</dbReference>
<dbReference type="PANTHER" id="PTHR10060:SF15">
    <property type="entry name" value="DEOXYRIBONUCLEASE TATDN1"/>
    <property type="match status" value="1"/>
</dbReference>
<dbReference type="PANTHER" id="PTHR10060">
    <property type="entry name" value="TATD FAMILY DEOXYRIBONUCLEASE"/>
    <property type="match status" value="1"/>
</dbReference>
<dbReference type="Pfam" id="PF01026">
    <property type="entry name" value="TatD_DNase"/>
    <property type="match status" value="1"/>
</dbReference>
<dbReference type="PIRSF" id="PIRSF005902">
    <property type="entry name" value="DNase_TatD"/>
    <property type="match status" value="1"/>
</dbReference>
<dbReference type="SUPFAM" id="SSF51556">
    <property type="entry name" value="Metallo-dependent hydrolases"/>
    <property type="match status" value="1"/>
</dbReference>
<dbReference type="PROSITE" id="PS01091">
    <property type="entry name" value="TATD_3"/>
    <property type="match status" value="1"/>
</dbReference>
<evidence type="ECO:0000250" key="1"/>
<evidence type="ECO:0000305" key="2"/>
<proteinExistence type="inferred from homology"/>
<gene>
    <name type="ORF">NCER_101798</name>
</gene>